<protein>
    <recommendedName>
        <fullName>Glyoxalase domain-containing protein 5</fullName>
    </recommendedName>
</protein>
<accession>Q502D1</accession>
<sequence length="163" mass="17816">MALTLRVCSTFLRSCSSNSKSVLSGLSSVRFRSSCPVLISHLDHLVLTVRDLNKTTKFYSEVLGMEVVTFKGDRKALSFGEQKINLHQVGKEFEPKAQTPTPGSADLCLITKTPLKAVADHLKACGVTIEEGPVDRTGAVGPISSLYFRDPDDNLIEVSNYQQ</sequence>
<feature type="chain" id="PRO_0000305328" description="Glyoxalase domain-containing protein 5">
    <location>
        <begin position="1"/>
        <end position="163"/>
    </location>
</feature>
<feature type="domain" description="VOC" evidence="1">
    <location>
        <begin position="41"/>
        <end position="161"/>
    </location>
</feature>
<reference key="1">
    <citation type="submission" date="2005-05" db="EMBL/GenBank/DDBJ databases">
        <authorList>
            <consortium name="NIH - Zebrafish Gene Collection (ZGC) project"/>
        </authorList>
    </citation>
    <scope>NUCLEOTIDE SEQUENCE [LARGE SCALE MRNA]</scope>
    <source>
        <tissue>Liver</tissue>
    </source>
</reference>
<comment type="similarity">
    <text evidence="2">Belongs to the glyoxalase I family.</text>
</comment>
<gene>
    <name type="primary">glod5</name>
    <name type="ORF">zgc:112315</name>
</gene>
<dbReference type="EMBL" id="BC095752">
    <property type="protein sequence ID" value="AAH95752.1"/>
    <property type="molecule type" value="mRNA"/>
</dbReference>
<dbReference type="RefSeq" id="NP_001018514.1">
    <property type="nucleotide sequence ID" value="NM_001020678.1"/>
</dbReference>
<dbReference type="SMR" id="Q502D1"/>
<dbReference type="FunCoup" id="Q502D1">
    <property type="interactions" value="2"/>
</dbReference>
<dbReference type="STRING" id="7955.ENSDARP00000097435"/>
<dbReference type="PaxDb" id="7955-ENSDARP00000097435"/>
<dbReference type="Ensembl" id="ENSDART00000106657">
    <property type="protein sequence ID" value="ENSDARP00000097435"/>
    <property type="gene ID" value="ENSDARG00000071871"/>
</dbReference>
<dbReference type="GeneID" id="553706"/>
<dbReference type="KEGG" id="dre:553706"/>
<dbReference type="AGR" id="ZFIN:ZDB-GENE-050522-174"/>
<dbReference type="CTD" id="392465"/>
<dbReference type="ZFIN" id="ZDB-GENE-050522-174">
    <property type="gene designation" value="glod5"/>
</dbReference>
<dbReference type="eggNOG" id="ENOG502S0RY">
    <property type="taxonomic scope" value="Eukaryota"/>
</dbReference>
<dbReference type="HOGENOM" id="CLU_046006_4_3_1"/>
<dbReference type="InParanoid" id="Q502D1"/>
<dbReference type="OMA" id="FGTHKIN"/>
<dbReference type="OrthoDB" id="5371818at2759"/>
<dbReference type="PhylomeDB" id="Q502D1"/>
<dbReference type="TreeFam" id="TF300075"/>
<dbReference type="PRO" id="PR:Q502D1"/>
<dbReference type="Proteomes" id="UP000000437">
    <property type="component" value="Chromosome 14"/>
</dbReference>
<dbReference type="Bgee" id="ENSDARG00000071871">
    <property type="expression patterns" value="Expressed in intestine and 19 other cell types or tissues"/>
</dbReference>
<dbReference type="CDD" id="cd07253">
    <property type="entry name" value="GLOD5"/>
    <property type="match status" value="1"/>
</dbReference>
<dbReference type="Gene3D" id="3.10.180.10">
    <property type="entry name" value="2,3-Dihydroxybiphenyl 1,2-Dioxygenase, domain 1"/>
    <property type="match status" value="1"/>
</dbReference>
<dbReference type="InterPro" id="IPR029068">
    <property type="entry name" value="Glyas_Bleomycin-R_OHBP_Dase"/>
</dbReference>
<dbReference type="InterPro" id="IPR004360">
    <property type="entry name" value="Glyas_Fos-R_dOase_dom"/>
</dbReference>
<dbReference type="InterPro" id="IPR050383">
    <property type="entry name" value="GlyoxalaseI/FosfomycinResist"/>
</dbReference>
<dbReference type="InterPro" id="IPR037523">
    <property type="entry name" value="VOC"/>
</dbReference>
<dbReference type="PANTHER" id="PTHR21366:SF14">
    <property type="entry name" value="GLYOXALASE DOMAIN-CONTAINING PROTEIN 5"/>
    <property type="match status" value="1"/>
</dbReference>
<dbReference type="PANTHER" id="PTHR21366">
    <property type="entry name" value="GLYOXALASE FAMILY PROTEIN"/>
    <property type="match status" value="1"/>
</dbReference>
<dbReference type="Pfam" id="PF00903">
    <property type="entry name" value="Glyoxalase"/>
    <property type="match status" value="1"/>
</dbReference>
<dbReference type="SUPFAM" id="SSF54593">
    <property type="entry name" value="Glyoxalase/Bleomycin resistance protein/Dihydroxybiphenyl dioxygenase"/>
    <property type="match status" value="1"/>
</dbReference>
<dbReference type="PROSITE" id="PS51819">
    <property type="entry name" value="VOC"/>
    <property type="match status" value="1"/>
</dbReference>
<evidence type="ECO:0000255" key="1">
    <source>
        <dbReference type="PROSITE-ProRule" id="PRU01163"/>
    </source>
</evidence>
<evidence type="ECO:0000305" key="2"/>
<organism>
    <name type="scientific">Danio rerio</name>
    <name type="common">Zebrafish</name>
    <name type="synonym">Brachydanio rerio</name>
    <dbReference type="NCBI Taxonomy" id="7955"/>
    <lineage>
        <taxon>Eukaryota</taxon>
        <taxon>Metazoa</taxon>
        <taxon>Chordata</taxon>
        <taxon>Craniata</taxon>
        <taxon>Vertebrata</taxon>
        <taxon>Euteleostomi</taxon>
        <taxon>Actinopterygii</taxon>
        <taxon>Neopterygii</taxon>
        <taxon>Teleostei</taxon>
        <taxon>Ostariophysi</taxon>
        <taxon>Cypriniformes</taxon>
        <taxon>Danionidae</taxon>
        <taxon>Danioninae</taxon>
        <taxon>Danio</taxon>
    </lineage>
</organism>
<proteinExistence type="evidence at transcript level"/>
<keyword id="KW-1185">Reference proteome</keyword>
<name>GLOD5_DANRE</name>